<feature type="chain" id="PRO_1000094686" description="UDP-N-acetylglucosamine 1-carboxyvinyltransferase">
    <location>
        <begin position="1"/>
        <end position="422"/>
    </location>
</feature>
<feature type="active site" description="Proton donor" evidence="1">
    <location>
        <position position="117"/>
    </location>
</feature>
<feature type="binding site" evidence="1">
    <location>
        <begin position="22"/>
        <end position="23"/>
    </location>
    <ligand>
        <name>phosphoenolpyruvate</name>
        <dbReference type="ChEBI" id="CHEBI:58702"/>
    </ligand>
</feature>
<feature type="binding site" evidence="1">
    <location>
        <position position="93"/>
    </location>
    <ligand>
        <name>UDP-N-acetyl-alpha-D-glucosamine</name>
        <dbReference type="ChEBI" id="CHEBI:57705"/>
    </ligand>
</feature>
<feature type="binding site" evidence="1">
    <location>
        <begin position="122"/>
        <end position="126"/>
    </location>
    <ligand>
        <name>UDP-N-acetyl-alpha-D-glucosamine</name>
        <dbReference type="ChEBI" id="CHEBI:57705"/>
    </ligand>
</feature>
<feature type="binding site" evidence="1">
    <location>
        <position position="309"/>
    </location>
    <ligand>
        <name>UDP-N-acetyl-alpha-D-glucosamine</name>
        <dbReference type="ChEBI" id="CHEBI:57705"/>
    </ligand>
</feature>
<feature type="binding site" evidence="1">
    <location>
        <position position="331"/>
    </location>
    <ligand>
        <name>UDP-N-acetyl-alpha-D-glucosamine</name>
        <dbReference type="ChEBI" id="CHEBI:57705"/>
    </ligand>
</feature>
<feature type="modified residue" description="2-(S-cysteinyl)pyruvic acid O-phosphothioketal" evidence="1">
    <location>
        <position position="117"/>
    </location>
</feature>
<accession>A9BX80</accession>
<organism>
    <name type="scientific">Delftia acidovorans (strain DSM 14801 / SPH-1)</name>
    <dbReference type="NCBI Taxonomy" id="398578"/>
    <lineage>
        <taxon>Bacteria</taxon>
        <taxon>Pseudomonadati</taxon>
        <taxon>Pseudomonadota</taxon>
        <taxon>Betaproteobacteria</taxon>
        <taxon>Burkholderiales</taxon>
        <taxon>Comamonadaceae</taxon>
        <taxon>Delftia</taxon>
    </lineage>
</organism>
<name>MURA_DELAS</name>
<reference key="1">
    <citation type="submission" date="2007-11" db="EMBL/GenBank/DDBJ databases">
        <title>Complete sequence of Delftia acidovorans DSM 14801 / SPH-1.</title>
        <authorList>
            <person name="Copeland A."/>
            <person name="Lucas S."/>
            <person name="Lapidus A."/>
            <person name="Barry K."/>
            <person name="Glavina del Rio T."/>
            <person name="Dalin E."/>
            <person name="Tice H."/>
            <person name="Pitluck S."/>
            <person name="Lowry S."/>
            <person name="Clum A."/>
            <person name="Schmutz J."/>
            <person name="Larimer F."/>
            <person name="Land M."/>
            <person name="Hauser L."/>
            <person name="Kyrpides N."/>
            <person name="Kim E."/>
            <person name="Schleheck D."/>
            <person name="Richardson P."/>
        </authorList>
    </citation>
    <scope>NUCLEOTIDE SEQUENCE [LARGE SCALE GENOMIC DNA]</scope>
    <source>
        <strain>DSM 14801 / SPH-1</strain>
    </source>
</reference>
<dbReference type="EC" id="2.5.1.7" evidence="1"/>
<dbReference type="EMBL" id="CP000884">
    <property type="protein sequence ID" value="ABX38156.1"/>
    <property type="molecule type" value="Genomic_DNA"/>
</dbReference>
<dbReference type="RefSeq" id="WP_012207325.1">
    <property type="nucleotide sequence ID" value="NC_010002.1"/>
</dbReference>
<dbReference type="SMR" id="A9BX80"/>
<dbReference type="STRING" id="398578.Daci_5527"/>
<dbReference type="GeneID" id="24115861"/>
<dbReference type="KEGG" id="dac:Daci_5527"/>
<dbReference type="eggNOG" id="COG0766">
    <property type="taxonomic scope" value="Bacteria"/>
</dbReference>
<dbReference type="HOGENOM" id="CLU_027387_0_0_4"/>
<dbReference type="UniPathway" id="UPA00219"/>
<dbReference type="Proteomes" id="UP000000784">
    <property type="component" value="Chromosome"/>
</dbReference>
<dbReference type="GO" id="GO:0005737">
    <property type="term" value="C:cytoplasm"/>
    <property type="evidence" value="ECO:0007669"/>
    <property type="project" value="UniProtKB-SubCell"/>
</dbReference>
<dbReference type="GO" id="GO:0008760">
    <property type="term" value="F:UDP-N-acetylglucosamine 1-carboxyvinyltransferase activity"/>
    <property type="evidence" value="ECO:0007669"/>
    <property type="project" value="UniProtKB-UniRule"/>
</dbReference>
<dbReference type="GO" id="GO:0051301">
    <property type="term" value="P:cell division"/>
    <property type="evidence" value="ECO:0007669"/>
    <property type="project" value="UniProtKB-KW"/>
</dbReference>
<dbReference type="GO" id="GO:0071555">
    <property type="term" value="P:cell wall organization"/>
    <property type="evidence" value="ECO:0007669"/>
    <property type="project" value="UniProtKB-KW"/>
</dbReference>
<dbReference type="GO" id="GO:0009252">
    <property type="term" value="P:peptidoglycan biosynthetic process"/>
    <property type="evidence" value="ECO:0007669"/>
    <property type="project" value="UniProtKB-UniRule"/>
</dbReference>
<dbReference type="GO" id="GO:0008360">
    <property type="term" value="P:regulation of cell shape"/>
    <property type="evidence" value="ECO:0007669"/>
    <property type="project" value="UniProtKB-KW"/>
</dbReference>
<dbReference type="GO" id="GO:0019277">
    <property type="term" value="P:UDP-N-acetylgalactosamine biosynthetic process"/>
    <property type="evidence" value="ECO:0007669"/>
    <property type="project" value="InterPro"/>
</dbReference>
<dbReference type="CDD" id="cd01555">
    <property type="entry name" value="UdpNAET"/>
    <property type="match status" value="1"/>
</dbReference>
<dbReference type="FunFam" id="3.65.10.10:FF:000001">
    <property type="entry name" value="UDP-N-acetylglucosamine 1-carboxyvinyltransferase"/>
    <property type="match status" value="1"/>
</dbReference>
<dbReference type="Gene3D" id="3.65.10.10">
    <property type="entry name" value="Enolpyruvate transferase domain"/>
    <property type="match status" value="2"/>
</dbReference>
<dbReference type="HAMAP" id="MF_00111">
    <property type="entry name" value="MurA"/>
    <property type="match status" value="1"/>
</dbReference>
<dbReference type="InterPro" id="IPR001986">
    <property type="entry name" value="Enolpyruvate_Tfrase_dom"/>
</dbReference>
<dbReference type="InterPro" id="IPR036968">
    <property type="entry name" value="Enolpyruvate_Tfrase_sf"/>
</dbReference>
<dbReference type="InterPro" id="IPR050068">
    <property type="entry name" value="MurA_subfamily"/>
</dbReference>
<dbReference type="InterPro" id="IPR013792">
    <property type="entry name" value="RNA3'P_cycl/enolpyr_Trfase_a/b"/>
</dbReference>
<dbReference type="InterPro" id="IPR005750">
    <property type="entry name" value="UDP_GlcNAc_COvinyl_MurA"/>
</dbReference>
<dbReference type="NCBIfam" id="TIGR01072">
    <property type="entry name" value="murA"/>
    <property type="match status" value="1"/>
</dbReference>
<dbReference type="NCBIfam" id="NF006873">
    <property type="entry name" value="PRK09369.1"/>
    <property type="match status" value="1"/>
</dbReference>
<dbReference type="PANTHER" id="PTHR43783">
    <property type="entry name" value="UDP-N-ACETYLGLUCOSAMINE 1-CARBOXYVINYLTRANSFERASE"/>
    <property type="match status" value="1"/>
</dbReference>
<dbReference type="PANTHER" id="PTHR43783:SF1">
    <property type="entry name" value="UDP-N-ACETYLGLUCOSAMINE 1-CARBOXYVINYLTRANSFERASE"/>
    <property type="match status" value="1"/>
</dbReference>
<dbReference type="Pfam" id="PF00275">
    <property type="entry name" value="EPSP_synthase"/>
    <property type="match status" value="1"/>
</dbReference>
<dbReference type="SUPFAM" id="SSF55205">
    <property type="entry name" value="EPT/RTPC-like"/>
    <property type="match status" value="1"/>
</dbReference>
<proteinExistence type="inferred from homology"/>
<comment type="function">
    <text evidence="1">Cell wall formation. Adds enolpyruvyl to UDP-N-acetylglucosamine.</text>
</comment>
<comment type="catalytic activity">
    <reaction evidence="1">
        <text>phosphoenolpyruvate + UDP-N-acetyl-alpha-D-glucosamine = UDP-N-acetyl-3-O-(1-carboxyvinyl)-alpha-D-glucosamine + phosphate</text>
        <dbReference type="Rhea" id="RHEA:18681"/>
        <dbReference type="ChEBI" id="CHEBI:43474"/>
        <dbReference type="ChEBI" id="CHEBI:57705"/>
        <dbReference type="ChEBI" id="CHEBI:58702"/>
        <dbReference type="ChEBI" id="CHEBI:68483"/>
        <dbReference type="EC" id="2.5.1.7"/>
    </reaction>
</comment>
<comment type="pathway">
    <text evidence="1">Cell wall biogenesis; peptidoglycan biosynthesis.</text>
</comment>
<comment type="subcellular location">
    <subcellularLocation>
        <location evidence="1">Cytoplasm</location>
    </subcellularLocation>
</comment>
<comment type="similarity">
    <text evidence="1">Belongs to the EPSP synthase family. MurA subfamily.</text>
</comment>
<gene>
    <name evidence="1" type="primary">murA</name>
    <name type="ordered locus">Daci_5527</name>
</gene>
<evidence type="ECO:0000255" key="1">
    <source>
        <dbReference type="HAMAP-Rule" id="MF_00111"/>
    </source>
</evidence>
<protein>
    <recommendedName>
        <fullName evidence="1">UDP-N-acetylglucosamine 1-carboxyvinyltransferase</fullName>
        <ecNumber evidence="1">2.5.1.7</ecNumber>
    </recommendedName>
    <alternativeName>
        <fullName evidence="1">Enoylpyruvate transferase</fullName>
    </alternativeName>
    <alternativeName>
        <fullName evidence="1">UDP-N-acetylglucosamine enolpyruvyl transferase</fullName>
        <shortName evidence="1">EPT</shortName>
    </alternativeName>
</protein>
<keyword id="KW-0131">Cell cycle</keyword>
<keyword id="KW-0132">Cell division</keyword>
<keyword id="KW-0133">Cell shape</keyword>
<keyword id="KW-0961">Cell wall biogenesis/degradation</keyword>
<keyword id="KW-0963">Cytoplasm</keyword>
<keyword id="KW-0573">Peptidoglycan synthesis</keyword>
<keyword id="KW-0670">Pyruvate</keyword>
<keyword id="KW-1185">Reference proteome</keyword>
<keyword id="KW-0808">Transferase</keyword>
<sequence>MDKLLIRGGRALHGEVTVSGAKNAALPELCAALLSSEPVTLRNVPRLQDVATMLKLIRNMGVSAEHDDSGTVRINAGSLSNPEAPYELVKTMRASVLALGPLLARFGQARVSLPGGCAIGSRPVDQHIKGLQAMGAEIVVENGYMNACLPGHLKRLQGARITTDMVTVTGTENFLMAAVLAEGETVLENAAMEPEIGDLAEMLIKMGARIEGHGTGRIVIQGVERLGGCEHQVVADRIEAGTFLCAVAATGGNALLRNGRADHLGAVIDKLKDAGAEVSAEDGGIRVRAAGKLKAQSFRTTEYPGFPTDMQAQFMALNLVAEGCSMVTETIFENRFMHVDEMLRLGAQITTDGRVATITGSQSLSGAAVMATDLRASASLVIAGLVAKGETLVDRIYHLDRGYDRMEDKLRGLGADIERVSQ</sequence>